<evidence type="ECO:0000256" key="1">
    <source>
        <dbReference type="SAM" id="MobiDB-lite"/>
    </source>
</evidence>
<evidence type="ECO:0000305" key="2"/>
<sequence>MAKELTREMLWEAGAQFGHQTKRWNPKMKPYIYGEKNKIHIIDLQQTLWRLEDVKKLMANIAARKGKILFVGTKKQAKWIVKDAAERCESFYVNQRWLGGTLTNLKTIHLRVKRLWNIERQEKNGELKLLPKKEQMLIKKEKDKLEKFLGGIKGMKELPQALFVVDPKEEHIAVREARKLRIPVIAICDTNVDPVPIDYIIPANDDTSRSIAIITHHIADLYGDAMGIKMPEPQFKPSEFTRRDGDENRNSRGGQYDNRRMSGRNERGRDTHYSHKAPNSGKEEAPVGTEPVATTSAPSFNFNTINVVDNDLEKTLSKLKVDELEILSEGFALPKAKKAEMVSELSKHLTIVDNKIVKK</sequence>
<gene>
    <name type="primary">rpsB</name>
    <name type="synonym">rps2</name>
</gene>
<dbReference type="EMBL" id="AF012877">
    <property type="protein sequence ID" value="AAB69994.1"/>
    <property type="molecule type" value="Genomic_DNA"/>
</dbReference>
<dbReference type="PIR" id="A35270">
    <property type="entry name" value="A35270"/>
</dbReference>
<dbReference type="SMR" id="P19679"/>
<dbReference type="STRING" id="2133.SCITRI_001132"/>
<dbReference type="GO" id="GO:0022627">
    <property type="term" value="C:cytosolic small ribosomal subunit"/>
    <property type="evidence" value="ECO:0007669"/>
    <property type="project" value="TreeGrafter"/>
</dbReference>
<dbReference type="GO" id="GO:0003735">
    <property type="term" value="F:structural constituent of ribosome"/>
    <property type="evidence" value="ECO:0007669"/>
    <property type="project" value="InterPro"/>
</dbReference>
<dbReference type="GO" id="GO:0006412">
    <property type="term" value="P:translation"/>
    <property type="evidence" value="ECO:0007669"/>
    <property type="project" value="UniProtKB-UniRule"/>
</dbReference>
<dbReference type="CDD" id="cd01425">
    <property type="entry name" value="RPS2"/>
    <property type="match status" value="1"/>
</dbReference>
<dbReference type="FunFam" id="1.10.287.610:FF:000001">
    <property type="entry name" value="30S ribosomal protein S2"/>
    <property type="match status" value="1"/>
</dbReference>
<dbReference type="Gene3D" id="3.40.50.10490">
    <property type="entry name" value="Glucose-6-phosphate isomerase like protein, domain 1"/>
    <property type="match status" value="1"/>
</dbReference>
<dbReference type="Gene3D" id="1.10.287.610">
    <property type="entry name" value="Helix hairpin bin"/>
    <property type="match status" value="1"/>
</dbReference>
<dbReference type="HAMAP" id="MF_00291_B">
    <property type="entry name" value="Ribosomal_uS2_B"/>
    <property type="match status" value="1"/>
</dbReference>
<dbReference type="InterPro" id="IPR001865">
    <property type="entry name" value="Ribosomal_uS2"/>
</dbReference>
<dbReference type="InterPro" id="IPR005706">
    <property type="entry name" value="Ribosomal_uS2_bac/mit/plastid"/>
</dbReference>
<dbReference type="InterPro" id="IPR018130">
    <property type="entry name" value="Ribosomal_uS2_CS"/>
</dbReference>
<dbReference type="InterPro" id="IPR023591">
    <property type="entry name" value="Ribosomal_uS2_flav_dom_sf"/>
</dbReference>
<dbReference type="NCBIfam" id="TIGR01011">
    <property type="entry name" value="rpsB_bact"/>
    <property type="match status" value="1"/>
</dbReference>
<dbReference type="PANTHER" id="PTHR12534">
    <property type="entry name" value="30S RIBOSOMAL PROTEIN S2 PROKARYOTIC AND ORGANELLAR"/>
    <property type="match status" value="1"/>
</dbReference>
<dbReference type="PANTHER" id="PTHR12534:SF0">
    <property type="entry name" value="SMALL RIBOSOMAL SUBUNIT PROTEIN US2M"/>
    <property type="match status" value="1"/>
</dbReference>
<dbReference type="Pfam" id="PF00318">
    <property type="entry name" value="Ribosomal_S2"/>
    <property type="match status" value="1"/>
</dbReference>
<dbReference type="PRINTS" id="PR00395">
    <property type="entry name" value="RIBOSOMALS2"/>
</dbReference>
<dbReference type="SUPFAM" id="SSF52313">
    <property type="entry name" value="Ribosomal protein S2"/>
    <property type="match status" value="1"/>
</dbReference>
<dbReference type="PROSITE" id="PS00963">
    <property type="entry name" value="RIBOSOMAL_S2_2"/>
    <property type="match status" value="1"/>
</dbReference>
<reference key="1">
    <citation type="journal article" date="1998" name="Curr. Microbiol.">
        <title>Gene organization and transcriptional analysis of the Spiroplasma citri rpsB/tsf/x operon.</title>
        <authorList>
            <person name="Le Dantec L."/>
            <person name="Bove J.M."/>
            <person name="Saillard C."/>
        </authorList>
    </citation>
    <scope>NUCLEOTIDE SEQUENCE [GENOMIC DNA]</scope>
    <source>
        <strain>ATCC 27556 / NCPPB 2647 / R8A2</strain>
    </source>
</reference>
<reference key="2">
    <citation type="journal article" date="1990" name="J. Bacteriol.">
        <title>Organization and nucleotide sequences of the Spiroplasma citri genes for ribosomal protein S2, elongation factor Ts, spiralin, phosphofructokinase, pyruvate kinase, and an unidentified protein.</title>
        <authorList>
            <person name="Chevalier C."/>
            <person name="Saillard C."/>
            <person name="Bove J.M."/>
        </authorList>
    </citation>
    <scope>NUCLEOTIDE SEQUENCE [GENOMIC DNA] OF 1-183</scope>
    <source>
        <strain>ATCC 27556 / NCPPB 2647 / R8A2</strain>
    </source>
</reference>
<organism>
    <name type="scientific">Spiroplasma citri</name>
    <dbReference type="NCBI Taxonomy" id="2133"/>
    <lineage>
        <taxon>Bacteria</taxon>
        <taxon>Bacillati</taxon>
        <taxon>Mycoplasmatota</taxon>
        <taxon>Mollicutes</taxon>
        <taxon>Entomoplasmatales</taxon>
        <taxon>Spiroplasmataceae</taxon>
        <taxon>Spiroplasma</taxon>
    </lineage>
</organism>
<name>RS2_SPICI</name>
<proteinExistence type="inferred from homology"/>
<feature type="chain" id="PRO_0000134236" description="Small ribosomal subunit protein uS2">
    <location>
        <begin position="1"/>
        <end position="359"/>
    </location>
</feature>
<feature type="region of interest" description="Disordered" evidence="1">
    <location>
        <begin position="232"/>
        <end position="295"/>
    </location>
</feature>
<feature type="compositionally biased region" description="Basic and acidic residues" evidence="1">
    <location>
        <begin position="239"/>
        <end position="250"/>
    </location>
</feature>
<feature type="compositionally biased region" description="Basic and acidic residues" evidence="1">
    <location>
        <begin position="257"/>
        <end position="273"/>
    </location>
</feature>
<feature type="sequence conflict" description="In Ref. 2." evidence="2" ref="2">
    <original>FLGGIKGMKE</original>
    <variation>ILRWKLKGWRK</variation>
    <location>
        <begin position="148"/>
        <end position="157"/>
    </location>
</feature>
<feature type="sequence conflict" description="In Ref. 2." evidence="2" ref="2">
    <original>F</original>
    <variation>I</variation>
    <location>
        <position position="163"/>
    </location>
</feature>
<feature type="sequence conflict" description="In Ref. 2." evidence="2" ref="2">
    <original>I</original>
    <variation>N</variation>
    <location>
        <position position="172"/>
    </location>
</feature>
<feature type="sequence conflict" description="In Ref. 2." evidence="2" ref="2">
    <original>LRI</original>
    <variation>ITN</variation>
    <location>
        <begin position="180"/>
        <end position="182"/>
    </location>
</feature>
<protein>
    <recommendedName>
        <fullName evidence="2">Small ribosomal subunit protein uS2</fullName>
    </recommendedName>
    <alternativeName>
        <fullName>30S ribosomal protein S2</fullName>
    </alternativeName>
</protein>
<accession>P19679</accession>
<accession>O30598</accession>
<keyword id="KW-0687">Ribonucleoprotein</keyword>
<keyword id="KW-0689">Ribosomal protein</keyword>
<comment type="similarity">
    <text evidence="2">Belongs to the universal ribosomal protein uS2 family.</text>
</comment>